<accession>Q9PK17</accession>
<organism>
    <name type="scientific">Chlamydia muridarum (strain MoPn / Nigg)</name>
    <dbReference type="NCBI Taxonomy" id="243161"/>
    <lineage>
        <taxon>Bacteria</taxon>
        <taxon>Pseudomonadati</taxon>
        <taxon>Chlamydiota</taxon>
        <taxon>Chlamydiia</taxon>
        <taxon>Chlamydiales</taxon>
        <taxon>Chlamydiaceae</taxon>
        <taxon>Chlamydia/Chlamydophila group</taxon>
        <taxon>Chlamydia</taxon>
    </lineage>
</organism>
<name>LTUA_CHLMU</name>
<feature type="chain" id="PRO_0000084516" description="Late transcription unit A protein">
    <location>
        <begin position="1"/>
        <end position="46"/>
    </location>
</feature>
<dbReference type="EMBL" id="AE002160">
    <property type="protein sequence ID" value="AAF39480.1"/>
    <property type="molecule type" value="Genomic_DNA"/>
</dbReference>
<dbReference type="PIR" id="D81678">
    <property type="entry name" value="D81678"/>
</dbReference>
<dbReference type="RefSeq" id="WP_010231129.1">
    <property type="nucleotide sequence ID" value="NZ_CP063055.1"/>
</dbReference>
<dbReference type="GeneID" id="1246017"/>
<dbReference type="KEGG" id="cmu:TC_0656"/>
<dbReference type="HOGENOM" id="CLU_208358_0_0_0"/>
<dbReference type="OrthoDB" id="18477at2"/>
<dbReference type="Proteomes" id="UP000000800">
    <property type="component" value="Chromosome"/>
</dbReference>
<dbReference type="InterPro" id="IPR035380">
    <property type="entry name" value="LtuA"/>
</dbReference>
<dbReference type="Pfam" id="PF17446">
    <property type="entry name" value="LtuA"/>
    <property type="match status" value="1"/>
</dbReference>
<sequence>MFFIRARFIGFLDVHGYLAAKKGQQVMRSGSSMWVGSQGPIFYKVF</sequence>
<proteinExistence type="predicted"/>
<gene>
    <name type="primary">ltuA</name>
    <name type="ordered locus">TC_0656</name>
</gene>
<protein>
    <recommendedName>
        <fullName>Late transcription unit A protein</fullName>
    </recommendedName>
</protein>
<reference key="1">
    <citation type="journal article" date="2000" name="Nucleic Acids Res.">
        <title>Genome sequences of Chlamydia trachomatis MoPn and Chlamydia pneumoniae AR39.</title>
        <authorList>
            <person name="Read T.D."/>
            <person name="Brunham R.C."/>
            <person name="Shen C."/>
            <person name="Gill S.R."/>
            <person name="Heidelberg J.F."/>
            <person name="White O."/>
            <person name="Hickey E.K."/>
            <person name="Peterson J.D."/>
            <person name="Utterback T.R."/>
            <person name="Berry K.J."/>
            <person name="Bass S."/>
            <person name="Linher K.D."/>
            <person name="Weidman J.F."/>
            <person name="Khouri H.M."/>
            <person name="Craven B."/>
            <person name="Bowman C."/>
            <person name="Dodson R.J."/>
            <person name="Gwinn M.L."/>
            <person name="Nelson W.C."/>
            <person name="DeBoy R.T."/>
            <person name="Kolonay J.F."/>
            <person name="McClarty G."/>
            <person name="Salzberg S.L."/>
            <person name="Eisen J.A."/>
            <person name="Fraser C.M."/>
        </authorList>
    </citation>
    <scope>NUCLEOTIDE SEQUENCE [LARGE SCALE GENOMIC DNA]</scope>
    <source>
        <strain>MoPn / Nigg</strain>
    </source>
</reference>